<sequence>MQRASRLKKELHMLAIEPPPGITCWQEKDQVADLRAQILGGANTPYEKGVFTLEVIIPERYPFEPPQVRFLTPIYHPNIDSSGRICLDILKLPPKGAWRPSLNIATVLTSIQLLMAEPNPDDPLMADISSEFKYNKIAFLKKAKQWTEAHARQKQKADEEELGTSSEVGDSEESHSTQKRKARPLGGMEKKFSPDVQRVYPGPS</sequence>
<comment type="function">
    <text evidence="1">Accepts ubiquitin from the E1 complex and catalyzes its covalent attachment to other proteins. Catalyzes monoubiquitination. Involved in mitomycin-C (MMC)-induced DNA repair: acts as a specific E2 ubiquitin-conjugating enzyme for the Fanconi anemia complex by associating with E3 ubiquitin-protein ligase FANCL and catalyzing monoubiquitination of FANCD2, a key step in the DNA damage pathway. Also mediates monoubiquitination of FANCL and FANCI. May contribute to ubiquitination and degradation of BRCA1. In vitro able to promote polyubiquitination using all 7 ubiquitin Lys residues, but may prefer 'Lys-11'-, 'Lys-27'-, 'Lys-48'- and 'Lys-63'-linked polyubiquitination.</text>
</comment>
<comment type="catalytic activity">
    <reaction evidence="2 3">
        <text>S-ubiquitinyl-[E1 ubiquitin-activating enzyme]-L-cysteine + [E2 ubiquitin-conjugating enzyme]-L-cysteine = [E1 ubiquitin-activating enzyme]-L-cysteine + S-ubiquitinyl-[E2 ubiquitin-conjugating enzyme]-L-cysteine.</text>
        <dbReference type="EC" id="2.3.2.23"/>
    </reaction>
</comment>
<comment type="pathway">
    <text evidence="2">Protein modification; protein ubiquitination.</text>
</comment>
<comment type="subunit">
    <text evidence="1">Interacts with FANCL and BRCA1.</text>
</comment>
<comment type="subcellular location">
    <subcellularLocation>
        <location evidence="1">Nucleus</location>
    </subcellularLocation>
    <text evidence="1">Accumulates to chromatin.</text>
</comment>
<comment type="PTM">
    <text evidence="1">Auto-ubiquitinated. Effects of auto-monoubiquitination at Lys-91 and Lys-181 are unclear.</text>
</comment>
<comment type="similarity">
    <text evidence="2">Belongs to the ubiquitin-conjugating enzyme family.</text>
</comment>
<proteinExistence type="evidence at protein level"/>
<name>UBE2T_MOUSE</name>
<gene>
    <name type="primary">Ube2t</name>
</gene>
<reference key="1">
    <citation type="journal article" date="2005" name="Science">
        <title>The transcriptional landscape of the mammalian genome.</title>
        <authorList>
            <person name="Carninci P."/>
            <person name="Kasukawa T."/>
            <person name="Katayama S."/>
            <person name="Gough J."/>
            <person name="Frith M.C."/>
            <person name="Maeda N."/>
            <person name="Oyama R."/>
            <person name="Ravasi T."/>
            <person name="Lenhard B."/>
            <person name="Wells C."/>
            <person name="Kodzius R."/>
            <person name="Shimokawa K."/>
            <person name="Bajic V.B."/>
            <person name="Brenner S.E."/>
            <person name="Batalov S."/>
            <person name="Forrest A.R."/>
            <person name="Zavolan M."/>
            <person name="Davis M.J."/>
            <person name="Wilming L.G."/>
            <person name="Aidinis V."/>
            <person name="Allen J.E."/>
            <person name="Ambesi-Impiombato A."/>
            <person name="Apweiler R."/>
            <person name="Aturaliya R.N."/>
            <person name="Bailey T.L."/>
            <person name="Bansal M."/>
            <person name="Baxter L."/>
            <person name="Beisel K.W."/>
            <person name="Bersano T."/>
            <person name="Bono H."/>
            <person name="Chalk A.M."/>
            <person name="Chiu K.P."/>
            <person name="Choudhary V."/>
            <person name="Christoffels A."/>
            <person name="Clutterbuck D.R."/>
            <person name="Crowe M.L."/>
            <person name="Dalla E."/>
            <person name="Dalrymple B.P."/>
            <person name="de Bono B."/>
            <person name="Della Gatta G."/>
            <person name="di Bernardo D."/>
            <person name="Down T."/>
            <person name="Engstrom P."/>
            <person name="Fagiolini M."/>
            <person name="Faulkner G."/>
            <person name="Fletcher C.F."/>
            <person name="Fukushima T."/>
            <person name="Furuno M."/>
            <person name="Futaki S."/>
            <person name="Gariboldi M."/>
            <person name="Georgii-Hemming P."/>
            <person name="Gingeras T.R."/>
            <person name="Gojobori T."/>
            <person name="Green R.E."/>
            <person name="Gustincich S."/>
            <person name="Harbers M."/>
            <person name="Hayashi Y."/>
            <person name="Hensch T.K."/>
            <person name="Hirokawa N."/>
            <person name="Hill D."/>
            <person name="Huminiecki L."/>
            <person name="Iacono M."/>
            <person name="Ikeo K."/>
            <person name="Iwama A."/>
            <person name="Ishikawa T."/>
            <person name="Jakt M."/>
            <person name="Kanapin A."/>
            <person name="Katoh M."/>
            <person name="Kawasawa Y."/>
            <person name="Kelso J."/>
            <person name="Kitamura H."/>
            <person name="Kitano H."/>
            <person name="Kollias G."/>
            <person name="Krishnan S.P."/>
            <person name="Kruger A."/>
            <person name="Kummerfeld S.K."/>
            <person name="Kurochkin I.V."/>
            <person name="Lareau L.F."/>
            <person name="Lazarevic D."/>
            <person name="Lipovich L."/>
            <person name="Liu J."/>
            <person name="Liuni S."/>
            <person name="McWilliam S."/>
            <person name="Madan Babu M."/>
            <person name="Madera M."/>
            <person name="Marchionni L."/>
            <person name="Matsuda H."/>
            <person name="Matsuzawa S."/>
            <person name="Miki H."/>
            <person name="Mignone F."/>
            <person name="Miyake S."/>
            <person name="Morris K."/>
            <person name="Mottagui-Tabar S."/>
            <person name="Mulder N."/>
            <person name="Nakano N."/>
            <person name="Nakauchi H."/>
            <person name="Ng P."/>
            <person name="Nilsson R."/>
            <person name="Nishiguchi S."/>
            <person name="Nishikawa S."/>
            <person name="Nori F."/>
            <person name="Ohara O."/>
            <person name="Okazaki Y."/>
            <person name="Orlando V."/>
            <person name="Pang K.C."/>
            <person name="Pavan W.J."/>
            <person name="Pavesi G."/>
            <person name="Pesole G."/>
            <person name="Petrovsky N."/>
            <person name="Piazza S."/>
            <person name="Reed J."/>
            <person name="Reid J.F."/>
            <person name="Ring B.Z."/>
            <person name="Ringwald M."/>
            <person name="Rost B."/>
            <person name="Ruan Y."/>
            <person name="Salzberg S.L."/>
            <person name="Sandelin A."/>
            <person name="Schneider C."/>
            <person name="Schoenbach C."/>
            <person name="Sekiguchi K."/>
            <person name="Semple C.A."/>
            <person name="Seno S."/>
            <person name="Sessa L."/>
            <person name="Sheng Y."/>
            <person name="Shibata Y."/>
            <person name="Shimada H."/>
            <person name="Shimada K."/>
            <person name="Silva D."/>
            <person name="Sinclair B."/>
            <person name="Sperling S."/>
            <person name="Stupka E."/>
            <person name="Sugiura K."/>
            <person name="Sultana R."/>
            <person name="Takenaka Y."/>
            <person name="Taki K."/>
            <person name="Tammoja K."/>
            <person name="Tan S.L."/>
            <person name="Tang S."/>
            <person name="Taylor M.S."/>
            <person name="Tegner J."/>
            <person name="Teichmann S.A."/>
            <person name="Ueda H.R."/>
            <person name="van Nimwegen E."/>
            <person name="Verardo R."/>
            <person name="Wei C.L."/>
            <person name="Yagi K."/>
            <person name="Yamanishi H."/>
            <person name="Zabarovsky E."/>
            <person name="Zhu S."/>
            <person name="Zimmer A."/>
            <person name="Hide W."/>
            <person name="Bult C."/>
            <person name="Grimmond S.M."/>
            <person name="Teasdale R.D."/>
            <person name="Liu E.T."/>
            <person name="Brusic V."/>
            <person name="Quackenbush J."/>
            <person name="Wahlestedt C."/>
            <person name="Mattick J.S."/>
            <person name="Hume D.A."/>
            <person name="Kai C."/>
            <person name="Sasaki D."/>
            <person name="Tomaru Y."/>
            <person name="Fukuda S."/>
            <person name="Kanamori-Katayama M."/>
            <person name="Suzuki M."/>
            <person name="Aoki J."/>
            <person name="Arakawa T."/>
            <person name="Iida J."/>
            <person name="Imamura K."/>
            <person name="Itoh M."/>
            <person name="Kato T."/>
            <person name="Kawaji H."/>
            <person name="Kawagashira N."/>
            <person name="Kawashima T."/>
            <person name="Kojima M."/>
            <person name="Kondo S."/>
            <person name="Konno H."/>
            <person name="Nakano K."/>
            <person name="Ninomiya N."/>
            <person name="Nishio T."/>
            <person name="Okada M."/>
            <person name="Plessy C."/>
            <person name="Shibata K."/>
            <person name="Shiraki T."/>
            <person name="Suzuki S."/>
            <person name="Tagami M."/>
            <person name="Waki K."/>
            <person name="Watahiki A."/>
            <person name="Okamura-Oho Y."/>
            <person name="Suzuki H."/>
            <person name="Kawai J."/>
            <person name="Hayashizaki Y."/>
        </authorList>
    </citation>
    <scope>NUCLEOTIDE SEQUENCE [LARGE SCALE MRNA]</scope>
    <source>
        <strain>C57BL/6J</strain>
    </source>
</reference>
<reference key="2">
    <citation type="journal article" date="2004" name="Genome Res.">
        <title>The status, quality, and expansion of the NIH full-length cDNA project: the Mammalian Gene Collection (MGC).</title>
        <authorList>
            <consortium name="The MGC Project Team"/>
        </authorList>
    </citation>
    <scope>NUCLEOTIDE SEQUENCE [LARGE SCALE MRNA]</scope>
    <source>
        <strain>Czech II</strain>
        <tissue>Mammary tumor</tissue>
    </source>
</reference>
<reference key="3">
    <citation type="journal article" date="2010" name="Cell">
        <title>A tissue-specific atlas of mouse protein phosphorylation and expression.</title>
        <authorList>
            <person name="Huttlin E.L."/>
            <person name="Jedrychowski M.P."/>
            <person name="Elias J.E."/>
            <person name="Goswami T."/>
            <person name="Rad R."/>
            <person name="Beausoleil S.A."/>
            <person name="Villen J."/>
            <person name="Haas W."/>
            <person name="Sowa M.E."/>
            <person name="Gygi S.P."/>
        </authorList>
    </citation>
    <scope>PHOSPHORYLATION [LARGE SCALE ANALYSIS] AT SER-193</scope>
    <scope>IDENTIFICATION BY MASS SPECTROMETRY [LARGE SCALE ANALYSIS]</scope>
    <source>
        <tissue>Spleen</tissue>
        <tissue>Testis</tissue>
    </source>
</reference>
<organism>
    <name type="scientific">Mus musculus</name>
    <name type="common">Mouse</name>
    <dbReference type="NCBI Taxonomy" id="10090"/>
    <lineage>
        <taxon>Eukaryota</taxon>
        <taxon>Metazoa</taxon>
        <taxon>Chordata</taxon>
        <taxon>Craniata</taxon>
        <taxon>Vertebrata</taxon>
        <taxon>Euteleostomi</taxon>
        <taxon>Mammalia</taxon>
        <taxon>Eutheria</taxon>
        <taxon>Euarchontoglires</taxon>
        <taxon>Glires</taxon>
        <taxon>Rodentia</taxon>
        <taxon>Myomorpha</taxon>
        <taxon>Muroidea</taxon>
        <taxon>Muridae</taxon>
        <taxon>Murinae</taxon>
        <taxon>Mus</taxon>
        <taxon>Mus</taxon>
    </lineage>
</organism>
<feature type="chain" id="PRO_0000082510" description="Ubiquitin-conjugating enzyme E2 T">
    <location>
        <begin position="1"/>
        <end position="204"/>
    </location>
</feature>
<feature type="domain" description="UBC core" evidence="2">
    <location>
        <begin position="2"/>
        <end position="152"/>
    </location>
</feature>
<feature type="region of interest" description="Disordered" evidence="4">
    <location>
        <begin position="150"/>
        <end position="204"/>
    </location>
</feature>
<feature type="active site" description="Glycyl thioester intermediate" evidence="2 3">
    <location>
        <position position="86"/>
    </location>
</feature>
<feature type="modified residue" description="Phosphoserine" evidence="5">
    <location>
        <position position="193"/>
    </location>
</feature>
<feature type="cross-link" description="Glycyl lysine isopeptide (Lys-Gly) (interchain with G-Cter in ubiquitin)" evidence="1">
    <location>
        <position position="91"/>
    </location>
</feature>
<feature type="cross-link" description="Glycyl lysine isopeptide (Lys-Gly) (interchain with G-Cter in ubiquitin)" evidence="1">
    <location>
        <position position="181"/>
    </location>
</feature>
<feature type="cross-link" description="Glycyl lysine isopeptide (Lys-Gly) (interchain with G-Cter in SUMO2)" evidence="1">
    <location>
        <position position="190"/>
    </location>
</feature>
<feature type="cross-link" description="Glycyl lysine isopeptide (Lys-Gly) (interchain with G-Cter in SUMO2)" evidence="1">
    <location>
        <position position="191"/>
    </location>
</feature>
<keyword id="KW-0067">ATP-binding</keyword>
<keyword id="KW-0227">DNA damage</keyword>
<keyword id="KW-0234">DNA repair</keyword>
<keyword id="KW-1017">Isopeptide bond</keyword>
<keyword id="KW-0547">Nucleotide-binding</keyword>
<keyword id="KW-0539">Nucleus</keyword>
<keyword id="KW-0597">Phosphoprotein</keyword>
<keyword id="KW-1185">Reference proteome</keyword>
<keyword id="KW-0808">Transferase</keyword>
<keyword id="KW-0832">Ubl conjugation</keyword>
<keyword id="KW-0833">Ubl conjugation pathway</keyword>
<dbReference type="EC" id="2.3.2.23"/>
<dbReference type="EMBL" id="AK012565">
    <property type="protein sequence ID" value="BAB28320.1"/>
    <property type="molecule type" value="mRNA"/>
</dbReference>
<dbReference type="EMBL" id="AK021213">
    <property type="protein sequence ID" value="BAB32332.1"/>
    <property type="molecule type" value="mRNA"/>
</dbReference>
<dbReference type="EMBL" id="BC029213">
    <property type="protein sequence ID" value="AAH29213.1"/>
    <property type="molecule type" value="mRNA"/>
</dbReference>
<dbReference type="CCDS" id="CCDS15313.1"/>
<dbReference type="RefSeq" id="NP_001265044.1">
    <property type="nucleotide sequence ID" value="NM_001278115.1"/>
</dbReference>
<dbReference type="RefSeq" id="NP_080300.1">
    <property type="nucleotide sequence ID" value="NM_026024.3"/>
</dbReference>
<dbReference type="SMR" id="Q9CQ37"/>
<dbReference type="FunCoup" id="Q9CQ37">
    <property type="interactions" value="2020"/>
</dbReference>
<dbReference type="STRING" id="10090.ENSMUSP00000027687"/>
<dbReference type="iPTMnet" id="Q9CQ37"/>
<dbReference type="PhosphoSitePlus" id="Q9CQ37"/>
<dbReference type="SwissPalm" id="Q9CQ37"/>
<dbReference type="jPOST" id="Q9CQ37"/>
<dbReference type="PaxDb" id="10090-ENSMUSP00000027687"/>
<dbReference type="PeptideAtlas" id="Q9CQ37"/>
<dbReference type="ProteomicsDB" id="298085"/>
<dbReference type="Pumba" id="Q9CQ37"/>
<dbReference type="Antibodypedia" id="1227">
    <property type="antibodies" value="307 antibodies from 34 providers"/>
</dbReference>
<dbReference type="DNASU" id="67196"/>
<dbReference type="Ensembl" id="ENSMUST00000027687.8">
    <property type="protein sequence ID" value="ENSMUSP00000027687.8"/>
    <property type="gene ID" value="ENSMUSG00000026429.10"/>
</dbReference>
<dbReference type="GeneID" id="67196"/>
<dbReference type="KEGG" id="mmu:67196"/>
<dbReference type="UCSC" id="uc007csp.2">
    <property type="organism name" value="mouse"/>
</dbReference>
<dbReference type="AGR" id="MGI:1914446"/>
<dbReference type="CTD" id="29089"/>
<dbReference type="MGI" id="MGI:1914446">
    <property type="gene designation" value="Ube2t"/>
</dbReference>
<dbReference type="VEuPathDB" id="HostDB:ENSMUSG00000026429"/>
<dbReference type="eggNOG" id="KOG0417">
    <property type="taxonomic scope" value="Eukaryota"/>
</dbReference>
<dbReference type="GeneTree" id="ENSGT00940000157365"/>
<dbReference type="HOGENOM" id="CLU_030988_13_2_1"/>
<dbReference type="InParanoid" id="Q9CQ37"/>
<dbReference type="OMA" id="GVEKKFC"/>
<dbReference type="OrthoDB" id="9978460at2759"/>
<dbReference type="PhylomeDB" id="Q9CQ37"/>
<dbReference type="TreeFam" id="TF354203"/>
<dbReference type="Reactome" id="R-MMU-6783310">
    <property type="pathway name" value="Fanconi Anemia Pathway"/>
</dbReference>
<dbReference type="Reactome" id="R-MMU-8866652">
    <property type="pathway name" value="Synthesis of active ubiquitin: roles of E1 and E2 enzymes"/>
</dbReference>
<dbReference type="UniPathway" id="UPA00143"/>
<dbReference type="BioGRID-ORCS" id="67196">
    <property type="hits" value="18 hits in 117 CRISPR screens"/>
</dbReference>
<dbReference type="PRO" id="PR:Q9CQ37"/>
<dbReference type="Proteomes" id="UP000000589">
    <property type="component" value="Chromosome 1"/>
</dbReference>
<dbReference type="RNAct" id="Q9CQ37">
    <property type="molecule type" value="protein"/>
</dbReference>
<dbReference type="Bgee" id="ENSMUSG00000026429">
    <property type="expression patterns" value="Expressed in primary oocyte and 189 other cell types or tissues"/>
</dbReference>
<dbReference type="ExpressionAtlas" id="Q9CQ37">
    <property type="expression patterns" value="baseline and differential"/>
</dbReference>
<dbReference type="GO" id="GO:0005730">
    <property type="term" value="C:nucleolus"/>
    <property type="evidence" value="ECO:0007669"/>
    <property type="project" value="Ensembl"/>
</dbReference>
<dbReference type="GO" id="GO:0005654">
    <property type="term" value="C:nucleoplasm"/>
    <property type="evidence" value="ECO:0007669"/>
    <property type="project" value="Ensembl"/>
</dbReference>
<dbReference type="GO" id="GO:0005524">
    <property type="term" value="F:ATP binding"/>
    <property type="evidence" value="ECO:0007669"/>
    <property type="project" value="UniProtKB-KW"/>
</dbReference>
<dbReference type="GO" id="GO:0003682">
    <property type="term" value="F:chromatin binding"/>
    <property type="evidence" value="ECO:0000250"/>
    <property type="project" value="UniProtKB"/>
</dbReference>
<dbReference type="GO" id="GO:0061631">
    <property type="term" value="F:ubiquitin conjugating enzyme activity"/>
    <property type="evidence" value="ECO:0000266"/>
    <property type="project" value="MGI"/>
</dbReference>
<dbReference type="GO" id="GO:0031625">
    <property type="term" value="F:ubiquitin protein ligase binding"/>
    <property type="evidence" value="ECO:0007669"/>
    <property type="project" value="Ensembl"/>
</dbReference>
<dbReference type="GO" id="GO:0004842">
    <property type="term" value="F:ubiquitin-protein transferase activity"/>
    <property type="evidence" value="ECO:0000250"/>
    <property type="project" value="UniProtKB"/>
</dbReference>
<dbReference type="GO" id="GO:0006974">
    <property type="term" value="P:DNA damage response"/>
    <property type="evidence" value="ECO:0000250"/>
    <property type="project" value="UniProtKB"/>
</dbReference>
<dbReference type="GO" id="GO:0006281">
    <property type="term" value="P:DNA repair"/>
    <property type="evidence" value="ECO:0000250"/>
    <property type="project" value="UniProtKB"/>
</dbReference>
<dbReference type="GO" id="GO:0051865">
    <property type="term" value="P:protein autoubiquitination"/>
    <property type="evidence" value="ECO:0000250"/>
    <property type="project" value="UniProtKB"/>
</dbReference>
<dbReference type="GO" id="GO:0070979">
    <property type="term" value="P:protein K11-linked ubiquitination"/>
    <property type="evidence" value="ECO:0000250"/>
    <property type="project" value="UniProtKB"/>
</dbReference>
<dbReference type="GO" id="GO:0044314">
    <property type="term" value="P:protein K27-linked ubiquitination"/>
    <property type="evidence" value="ECO:0000250"/>
    <property type="project" value="UniProtKB"/>
</dbReference>
<dbReference type="GO" id="GO:0035519">
    <property type="term" value="P:protein K29-linked ubiquitination"/>
    <property type="evidence" value="ECO:0000250"/>
    <property type="project" value="UniProtKB"/>
</dbReference>
<dbReference type="GO" id="GO:0070936">
    <property type="term" value="P:protein K48-linked ubiquitination"/>
    <property type="evidence" value="ECO:0000250"/>
    <property type="project" value="UniProtKB"/>
</dbReference>
<dbReference type="GO" id="GO:0085020">
    <property type="term" value="P:protein K6-linked ubiquitination"/>
    <property type="evidence" value="ECO:0000250"/>
    <property type="project" value="UniProtKB"/>
</dbReference>
<dbReference type="GO" id="GO:0070534">
    <property type="term" value="P:protein K63-linked ubiquitination"/>
    <property type="evidence" value="ECO:0000250"/>
    <property type="project" value="UniProtKB"/>
</dbReference>
<dbReference type="GO" id="GO:0006513">
    <property type="term" value="P:protein monoubiquitination"/>
    <property type="evidence" value="ECO:0000250"/>
    <property type="project" value="UniProtKB"/>
</dbReference>
<dbReference type="CDD" id="cd23805">
    <property type="entry name" value="UBCc_UBE2T"/>
    <property type="match status" value="1"/>
</dbReference>
<dbReference type="FunFam" id="3.10.110.10:FF:000041">
    <property type="entry name" value="Ubiquitin-conjugating enzyme E2 T"/>
    <property type="match status" value="1"/>
</dbReference>
<dbReference type="Gene3D" id="3.10.110.10">
    <property type="entry name" value="Ubiquitin Conjugating Enzyme"/>
    <property type="match status" value="1"/>
</dbReference>
<dbReference type="InterPro" id="IPR050113">
    <property type="entry name" value="Ub_conjugating_enzyme"/>
</dbReference>
<dbReference type="InterPro" id="IPR000608">
    <property type="entry name" value="UBQ-conjugat_E2_core"/>
</dbReference>
<dbReference type="InterPro" id="IPR023313">
    <property type="entry name" value="UBQ-conjugating_AS"/>
</dbReference>
<dbReference type="InterPro" id="IPR016135">
    <property type="entry name" value="UBQ-conjugating_enzyme/RWD"/>
</dbReference>
<dbReference type="PANTHER" id="PTHR24067">
    <property type="entry name" value="UBIQUITIN-CONJUGATING ENZYME E2"/>
    <property type="match status" value="1"/>
</dbReference>
<dbReference type="Pfam" id="PF00179">
    <property type="entry name" value="UQ_con"/>
    <property type="match status" value="1"/>
</dbReference>
<dbReference type="SMART" id="SM00212">
    <property type="entry name" value="UBCc"/>
    <property type="match status" value="1"/>
</dbReference>
<dbReference type="SUPFAM" id="SSF54495">
    <property type="entry name" value="UBC-like"/>
    <property type="match status" value="1"/>
</dbReference>
<dbReference type="PROSITE" id="PS00183">
    <property type="entry name" value="UBC_1"/>
    <property type="match status" value="1"/>
</dbReference>
<dbReference type="PROSITE" id="PS50127">
    <property type="entry name" value="UBC_2"/>
    <property type="match status" value="1"/>
</dbReference>
<evidence type="ECO:0000250" key="1">
    <source>
        <dbReference type="UniProtKB" id="Q9NPD8"/>
    </source>
</evidence>
<evidence type="ECO:0000255" key="2">
    <source>
        <dbReference type="PROSITE-ProRule" id="PRU00388"/>
    </source>
</evidence>
<evidence type="ECO:0000255" key="3">
    <source>
        <dbReference type="PROSITE-ProRule" id="PRU10133"/>
    </source>
</evidence>
<evidence type="ECO:0000256" key="4">
    <source>
        <dbReference type="SAM" id="MobiDB-lite"/>
    </source>
</evidence>
<evidence type="ECO:0007744" key="5">
    <source>
    </source>
</evidence>
<protein>
    <recommendedName>
        <fullName>Ubiquitin-conjugating enzyme E2 T</fullName>
        <ecNumber>2.3.2.23</ecNumber>
    </recommendedName>
    <alternativeName>
        <fullName>E2 ubiquitin-conjugating enzyme T</fullName>
    </alternativeName>
    <alternativeName>
        <fullName>Ubiquitin carrier protein T</fullName>
    </alternativeName>
    <alternativeName>
        <fullName>Ubiquitin-protein ligase T</fullName>
    </alternativeName>
</protein>
<accession>Q9CQ37</accession>